<comment type="function">
    <text>Seed storage. This carbohydrate-binding lectin has toxic effects on the important bean bruchid pests, Z.subfasciatus and A.obtectus.</text>
</comment>
<comment type="similarity">
    <text evidence="3">Belongs to the leguminous lectin family.</text>
</comment>
<keyword id="KW-0325">Glycoprotein</keyword>
<keyword id="KW-0430">Lectin</keyword>
<keyword id="KW-0611">Plant defense</keyword>
<keyword id="KW-0708">Seed storage protein</keyword>
<keyword id="KW-0732">Signal</keyword>
<keyword id="KW-0758">Storage protein</keyword>
<keyword id="KW-0800">Toxin</keyword>
<evidence type="ECO:0000250" key="1"/>
<evidence type="ECO:0000255" key="2"/>
<evidence type="ECO:0000305" key="3"/>
<dbReference type="EMBL" id="U10351">
    <property type="protein sequence ID" value="AAA67354.1"/>
    <property type="molecule type" value="mRNA"/>
</dbReference>
<dbReference type="PIR" id="S51833">
    <property type="entry name" value="S51833"/>
</dbReference>
<dbReference type="SMR" id="Q43629"/>
<dbReference type="GlyCosmos" id="Q43629">
    <property type="glycosylation" value="2 sites, No reported glycans"/>
</dbReference>
<dbReference type="GO" id="GO:0030246">
    <property type="term" value="F:carbohydrate binding"/>
    <property type="evidence" value="ECO:0007669"/>
    <property type="project" value="UniProtKB-KW"/>
</dbReference>
<dbReference type="GO" id="GO:0045735">
    <property type="term" value="F:nutrient reservoir activity"/>
    <property type="evidence" value="ECO:0007669"/>
    <property type="project" value="UniProtKB-KW"/>
</dbReference>
<dbReference type="GO" id="GO:0090729">
    <property type="term" value="F:toxin activity"/>
    <property type="evidence" value="ECO:0007669"/>
    <property type="project" value="UniProtKB-KW"/>
</dbReference>
<dbReference type="GO" id="GO:0006952">
    <property type="term" value="P:defense response"/>
    <property type="evidence" value="ECO:0007669"/>
    <property type="project" value="UniProtKB-KW"/>
</dbReference>
<dbReference type="CDD" id="cd06899">
    <property type="entry name" value="lectin_legume_LecRK_Arcelin_ConA"/>
    <property type="match status" value="1"/>
</dbReference>
<dbReference type="Gene3D" id="2.60.120.200">
    <property type="match status" value="1"/>
</dbReference>
<dbReference type="InterPro" id="IPR013320">
    <property type="entry name" value="ConA-like_dom_sf"/>
</dbReference>
<dbReference type="InterPro" id="IPR016363">
    <property type="entry name" value="L-lectin"/>
</dbReference>
<dbReference type="InterPro" id="IPR000985">
    <property type="entry name" value="Lectin_LegA_CS"/>
</dbReference>
<dbReference type="InterPro" id="IPR019825">
    <property type="entry name" value="Lectin_legB_Mn/Ca_BS"/>
</dbReference>
<dbReference type="InterPro" id="IPR001220">
    <property type="entry name" value="Legume_lectin_dom"/>
</dbReference>
<dbReference type="InterPro" id="IPR050258">
    <property type="entry name" value="Leguminous_Lectin"/>
</dbReference>
<dbReference type="PANTHER" id="PTHR32401">
    <property type="entry name" value="CONCANAVALIN A-LIKE LECTIN FAMILY PROTEIN"/>
    <property type="match status" value="1"/>
</dbReference>
<dbReference type="PANTHER" id="PTHR32401:SF45">
    <property type="entry name" value="LECTIN"/>
    <property type="match status" value="1"/>
</dbReference>
<dbReference type="Pfam" id="PF00139">
    <property type="entry name" value="Lectin_legB"/>
    <property type="match status" value="1"/>
</dbReference>
<dbReference type="PIRSF" id="PIRSF002690">
    <property type="entry name" value="L-type_lectin_plant"/>
    <property type="match status" value="1"/>
</dbReference>
<dbReference type="SUPFAM" id="SSF49899">
    <property type="entry name" value="Concanavalin A-like lectins/glucanases"/>
    <property type="match status" value="1"/>
</dbReference>
<dbReference type="PROSITE" id="PS00308">
    <property type="entry name" value="LECTIN_LEGUME_ALPHA"/>
    <property type="match status" value="1"/>
</dbReference>
<dbReference type="PROSITE" id="PS00307">
    <property type="entry name" value="LECTIN_LEGUME_BETA"/>
    <property type="match status" value="1"/>
</dbReference>
<feature type="signal peptide" evidence="1">
    <location>
        <begin position="1"/>
        <end position="21"/>
    </location>
</feature>
<feature type="chain" id="PRO_0000017638" description="Arcelin-4">
    <location>
        <begin position="22"/>
        <end position="266"/>
    </location>
</feature>
<feature type="glycosylation site" description="N-linked (GlcNAc...) asparagine" evidence="2">
    <location>
        <position position="28"/>
    </location>
</feature>
<feature type="glycosylation site" description="N-linked (GlcNAc...) asparagine" evidence="2">
    <location>
        <position position="92"/>
    </location>
</feature>
<organism>
    <name type="scientific">Phaseolus vulgaris</name>
    <name type="common">Kidney bean</name>
    <name type="synonym">French bean</name>
    <dbReference type="NCBI Taxonomy" id="3885"/>
    <lineage>
        <taxon>Eukaryota</taxon>
        <taxon>Viridiplantae</taxon>
        <taxon>Streptophyta</taxon>
        <taxon>Embryophyta</taxon>
        <taxon>Tracheophyta</taxon>
        <taxon>Spermatophyta</taxon>
        <taxon>Magnoliopsida</taxon>
        <taxon>eudicotyledons</taxon>
        <taxon>Gunneridae</taxon>
        <taxon>Pentapetalae</taxon>
        <taxon>rosids</taxon>
        <taxon>fabids</taxon>
        <taxon>Fabales</taxon>
        <taxon>Fabaceae</taxon>
        <taxon>Papilionoideae</taxon>
        <taxon>50 kb inversion clade</taxon>
        <taxon>NPAAA clade</taxon>
        <taxon>indigoferoid/millettioid clade</taxon>
        <taxon>Phaseoleae</taxon>
        <taxon>Phaseolus</taxon>
    </lineage>
</organism>
<proteinExistence type="evidence at transcript level"/>
<gene>
    <name type="primary">ARC4</name>
</gene>
<protein>
    <recommendedName>
        <fullName>Arcelin-4</fullName>
    </recommendedName>
</protein>
<sequence>MGSSKLLSLALLLVLLTHANSASETSFNFTSFDTNKLILQGDASVSSKGQLLLTKVRGNGDPTVDSMGRAFYYAPIQIRDSTTGKLASFDTNFTFSIRPYSNNENSAFGLAFALVPVDSEPKRKDYFLGLFNKPDDPEAHIVAVVFDTSSNQIEIDMNSISPVARESCHFHKYNGEKVEVRITYDSSKKNLRASLVYLREQSATSSTSSVHMEKVLNDWVSVGFSATSGLYDPTSETHDVLSWSFSSKFSQHTTSERSNFLLNMFL</sequence>
<reference key="1">
    <citation type="journal article" date="1994" name="Plant Mol. Biol.">
        <title>Evolutionary relationships among proteins in the phytohemagglutinin-arcelin-alpha-amylase inhibitor family of the common bean and its relatives.</title>
        <authorList>
            <person name="Mirkov T.E."/>
            <person name="Wahlstrom J.M."/>
            <person name="Hagiwara K."/>
            <person name="Finardi-Filho F."/>
            <person name="Kjemtrup S."/>
            <person name="Chrispeels M.J."/>
        </authorList>
    </citation>
    <scope>NUCLEOTIDE SEQUENCE [MRNA]</scope>
    <source>
        <strain>cv. Arcelin 4</strain>
        <tissue>Seed</tissue>
    </source>
</reference>
<accession>Q43629</accession>
<name>ARC4_PHAVU</name>